<reference key="1">
    <citation type="journal article" date="1997" name="Nature">
        <title>The nucleotide sequence of Saccharomyces cerevisiae chromosome V.</title>
        <authorList>
            <person name="Dietrich F.S."/>
            <person name="Mulligan J.T."/>
            <person name="Hennessy K.M."/>
            <person name="Yelton M.A."/>
            <person name="Allen E."/>
            <person name="Araujo R."/>
            <person name="Aviles E."/>
            <person name="Berno A."/>
            <person name="Brennan T."/>
            <person name="Carpenter J."/>
            <person name="Chen E."/>
            <person name="Cherry J.M."/>
            <person name="Chung E."/>
            <person name="Duncan M."/>
            <person name="Guzman E."/>
            <person name="Hartzell G."/>
            <person name="Hunicke-Smith S."/>
            <person name="Hyman R.W."/>
            <person name="Kayser A."/>
            <person name="Komp C."/>
            <person name="Lashkari D."/>
            <person name="Lew H."/>
            <person name="Lin D."/>
            <person name="Mosedale D."/>
            <person name="Nakahara K."/>
            <person name="Namath A."/>
            <person name="Norgren R."/>
            <person name="Oefner P."/>
            <person name="Oh C."/>
            <person name="Petel F.X."/>
            <person name="Roberts D."/>
            <person name="Sehl P."/>
            <person name="Schramm S."/>
            <person name="Shogren T."/>
            <person name="Smith V."/>
            <person name="Taylor P."/>
            <person name="Wei Y."/>
            <person name="Botstein D."/>
            <person name="Davis R.W."/>
        </authorList>
    </citation>
    <scope>NUCLEOTIDE SEQUENCE [LARGE SCALE GENOMIC DNA]</scope>
    <source>
        <strain>ATCC 204508 / S288c</strain>
    </source>
</reference>
<reference key="2">
    <citation type="journal article" date="2014" name="G3 (Bethesda)">
        <title>The reference genome sequence of Saccharomyces cerevisiae: Then and now.</title>
        <authorList>
            <person name="Engel S.R."/>
            <person name="Dietrich F.S."/>
            <person name="Fisk D.G."/>
            <person name="Binkley G."/>
            <person name="Balakrishnan R."/>
            <person name="Costanzo M.C."/>
            <person name="Dwight S.S."/>
            <person name="Hitz B.C."/>
            <person name="Karra K."/>
            <person name="Nash R.S."/>
            <person name="Weng S."/>
            <person name="Wong E.D."/>
            <person name="Lloyd P."/>
            <person name="Skrzypek M.S."/>
            <person name="Miyasato S.R."/>
            <person name="Simison M."/>
            <person name="Cherry J.M."/>
        </authorList>
    </citation>
    <scope>GENOME REANNOTATION</scope>
    <source>
        <strain>ATCC 204508 / S288c</strain>
    </source>
</reference>
<reference key="3">
    <citation type="journal article" date="2007" name="Genome Res.">
        <title>Approaching a complete repository of sequence-verified protein-encoding clones for Saccharomyces cerevisiae.</title>
        <authorList>
            <person name="Hu Y."/>
            <person name="Rolfs A."/>
            <person name="Bhullar B."/>
            <person name="Murthy T.V.S."/>
            <person name="Zhu C."/>
            <person name="Berger M.F."/>
            <person name="Camargo A.A."/>
            <person name="Kelley F."/>
            <person name="McCarron S."/>
            <person name="Jepson D."/>
            <person name="Richardson A."/>
            <person name="Raphael J."/>
            <person name="Moreira D."/>
            <person name="Taycher E."/>
            <person name="Zuo D."/>
            <person name="Mohr S."/>
            <person name="Kane M.F."/>
            <person name="Williamson J."/>
            <person name="Simpson A.J.G."/>
            <person name="Bulyk M.L."/>
            <person name="Harlow E."/>
            <person name="Marsischky G."/>
            <person name="Kolodner R.D."/>
            <person name="LaBaer J."/>
        </authorList>
    </citation>
    <scope>NUCLEOTIDE SEQUENCE [GENOMIC DNA]</scope>
    <source>
        <strain>ATCC 204508 / S288c</strain>
    </source>
</reference>
<reference key="4">
    <citation type="journal article" date="2003" name="Nature">
        <title>Global analysis of protein localization in budding yeast.</title>
        <authorList>
            <person name="Huh W.-K."/>
            <person name="Falvo J.V."/>
            <person name="Gerke L.C."/>
            <person name="Carroll A.S."/>
            <person name="Howson R.W."/>
            <person name="Weissman J.S."/>
            <person name="O'Shea E.K."/>
        </authorList>
    </citation>
    <scope>SUBCELLULAR LOCATION [LARGE SCALE ANALYSIS]</scope>
</reference>
<reference key="5">
    <citation type="journal article" date="2003" name="Nature">
        <title>Global analysis of protein expression in yeast.</title>
        <authorList>
            <person name="Ghaemmaghami S."/>
            <person name="Huh W.-K."/>
            <person name="Bower K."/>
            <person name="Howson R.W."/>
            <person name="Belle A."/>
            <person name="Dephoure N."/>
            <person name="O'Shea E.K."/>
            <person name="Weissman J.S."/>
        </authorList>
    </citation>
    <scope>LEVEL OF PROTEIN EXPRESSION [LARGE SCALE ANALYSIS]</scope>
</reference>
<keyword id="KW-0963">Cytoplasm</keyword>
<keyword id="KW-0378">Hydrolase</keyword>
<keyword id="KW-0460">Magnesium</keyword>
<keyword id="KW-0479">Metal-binding</keyword>
<keyword id="KW-0539">Nucleus</keyword>
<keyword id="KW-0904">Protein phosphatase</keyword>
<keyword id="KW-1185">Reference proteome</keyword>
<feature type="chain" id="PRO_0000202650" description="Putative magnesium-dependent phosphatase YER134C">
    <location>
        <begin position="1"/>
        <end position="178"/>
    </location>
</feature>
<feature type="active site" description="Nucleophile" evidence="1">
    <location>
        <position position="11"/>
    </location>
</feature>
<feature type="active site" description="Proton donor" evidence="1">
    <location>
        <position position="13"/>
    </location>
</feature>
<feature type="binding site" evidence="1">
    <location>
        <position position="11"/>
    </location>
    <ligand>
        <name>Mg(2+)</name>
        <dbReference type="ChEBI" id="CHEBI:18420"/>
    </ligand>
</feature>
<feature type="binding site" evidence="1">
    <location>
        <position position="12"/>
    </location>
    <ligand>
        <name>phosphate</name>
        <dbReference type="ChEBI" id="CHEBI:43474"/>
    </ligand>
</feature>
<feature type="binding site" evidence="1">
    <location>
        <position position="13"/>
    </location>
    <ligand>
        <name>Mg(2+)</name>
        <dbReference type="ChEBI" id="CHEBI:18420"/>
    </ligand>
</feature>
<feature type="binding site" evidence="1">
    <location>
        <position position="13"/>
    </location>
    <ligand>
        <name>phosphate</name>
        <dbReference type="ChEBI" id="CHEBI:43474"/>
    </ligand>
</feature>
<feature type="binding site" evidence="1">
    <location>
        <position position="74"/>
    </location>
    <ligand>
        <name>phosphate</name>
        <dbReference type="ChEBI" id="CHEBI:43474"/>
    </ligand>
</feature>
<feature type="binding site" evidence="1">
    <location>
        <position position="75"/>
    </location>
    <ligand>
        <name>phosphate</name>
        <dbReference type="ChEBI" id="CHEBI:43474"/>
    </ligand>
</feature>
<feature type="binding site" evidence="1">
    <location>
        <position position="75"/>
    </location>
    <ligand>
        <name>substrate</name>
    </ligand>
</feature>
<feature type="binding site" evidence="1">
    <location>
        <position position="141"/>
    </location>
    <ligand>
        <name>Mg(2+)</name>
        <dbReference type="ChEBI" id="CHEBI:18420"/>
    </ligand>
</feature>
<dbReference type="EC" id="3.1.3.48"/>
<dbReference type="EMBL" id="U18916">
    <property type="protein sequence ID" value="AAC03232.1"/>
    <property type="molecule type" value="Genomic_DNA"/>
</dbReference>
<dbReference type="EMBL" id="AY558562">
    <property type="protein sequence ID" value="AAS56888.1"/>
    <property type="molecule type" value="Genomic_DNA"/>
</dbReference>
<dbReference type="EMBL" id="BK006939">
    <property type="protein sequence ID" value="DAA07794.1"/>
    <property type="molecule type" value="Genomic_DNA"/>
</dbReference>
<dbReference type="PIR" id="S50637">
    <property type="entry name" value="S50637"/>
</dbReference>
<dbReference type="RefSeq" id="NP_011060.1">
    <property type="nucleotide sequence ID" value="NM_001179024.1"/>
</dbReference>
<dbReference type="SMR" id="P40081"/>
<dbReference type="BioGRID" id="36880">
    <property type="interactions" value="110"/>
</dbReference>
<dbReference type="FunCoup" id="P40081">
    <property type="interactions" value="219"/>
</dbReference>
<dbReference type="IntAct" id="P40081">
    <property type="interactions" value="22"/>
</dbReference>
<dbReference type="STRING" id="4932.YER134C"/>
<dbReference type="iPTMnet" id="P40081"/>
<dbReference type="PaxDb" id="4932-YER134C"/>
<dbReference type="PeptideAtlas" id="P40081"/>
<dbReference type="EnsemblFungi" id="YER134C_mRNA">
    <property type="protein sequence ID" value="YER134C"/>
    <property type="gene ID" value="YER134C"/>
</dbReference>
<dbReference type="GeneID" id="856873"/>
<dbReference type="KEGG" id="sce:YER134C"/>
<dbReference type="AGR" id="SGD:S000000936"/>
<dbReference type="SGD" id="S000000936">
    <property type="gene designation" value="YER134C"/>
</dbReference>
<dbReference type="VEuPathDB" id="FungiDB:YER134C"/>
<dbReference type="eggNOG" id="KOG4549">
    <property type="taxonomic scope" value="Eukaryota"/>
</dbReference>
<dbReference type="GeneTree" id="ENSGT00940000165797"/>
<dbReference type="HOGENOM" id="CLU_071162_0_1_1"/>
<dbReference type="InParanoid" id="P40081"/>
<dbReference type="OMA" id="GVWAWRK"/>
<dbReference type="OrthoDB" id="2865258at2759"/>
<dbReference type="BioCyc" id="YEAST:G3O-30296-MONOMER"/>
<dbReference type="BioGRID-ORCS" id="856873">
    <property type="hits" value="0 hits in 10 CRISPR screens"/>
</dbReference>
<dbReference type="PRO" id="PR:P40081"/>
<dbReference type="Proteomes" id="UP000002311">
    <property type="component" value="Chromosome V"/>
</dbReference>
<dbReference type="RNAct" id="P40081">
    <property type="molecule type" value="protein"/>
</dbReference>
<dbReference type="GO" id="GO:0005737">
    <property type="term" value="C:cytoplasm"/>
    <property type="evidence" value="ECO:0007005"/>
    <property type="project" value="SGD"/>
</dbReference>
<dbReference type="GO" id="GO:0005634">
    <property type="term" value="C:nucleus"/>
    <property type="evidence" value="ECO:0007005"/>
    <property type="project" value="SGD"/>
</dbReference>
<dbReference type="GO" id="GO:0003993">
    <property type="term" value="F:acid phosphatase activity"/>
    <property type="evidence" value="ECO:0000314"/>
    <property type="project" value="SGD"/>
</dbReference>
<dbReference type="GO" id="GO:0046872">
    <property type="term" value="F:metal ion binding"/>
    <property type="evidence" value="ECO:0007669"/>
    <property type="project" value="UniProtKB-KW"/>
</dbReference>
<dbReference type="GO" id="GO:0030946">
    <property type="term" value="F:protein tyrosine phosphatase activity, metal-dependent"/>
    <property type="evidence" value="ECO:0000314"/>
    <property type="project" value="SGD"/>
</dbReference>
<dbReference type="CDD" id="cd07501">
    <property type="entry name" value="HAD_MDP-1_like"/>
    <property type="match status" value="1"/>
</dbReference>
<dbReference type="FunFam" id="3.40.50.1000:FF:000258">
    <property type="entry name" value="YER134C-like protein"/>
    <property type="match status" value="1"/>
</dbReference>
<dbReference type="Gene3D" id="3.40.50.1000">
    <property type="entry name" value="HAD superfamily/HAD-like"/>
    <property type="match status" value="1"/>
</dbReference>
<dbReference type="InterPro" id="IPR036412">
    <property type="entry name" value="HAD-like_sf"/>
</dbReference>
<dbReference type="InterPro" id="IPR023214">
    <property type="entry name" value="HAD_sf"/>
</dbReference>
<dbReference type="InterPro" id="IPR010033">
    <property type="entry name" value="HAD_SF_ppase_IIIC"/>
</dbReference>
<dbReference type="InterPro" id="IPR035679">
    <property type="entry name" value="MDP-1_euk"/>
</dbReference>
<dbReference type="InterPro" id="IPR010036">
    <property type="entry name" value="MDP_1_eu_arc"/>
</dbReference>
<dbReference type="NCBIfam" id="TIGR01681">
    <property type="entry name" value="HAD-SF-IIIC"/>
    <property type="match status" value="1"/>
</dbReference>
<dbReference type="NCBIfam" id="TIGR01685">
    <property type="entry name" value="MDP-1"/>
    <property type="match status" value="1"/>
</dbReference>
<dbReference type="PANTHER" id="PTHR17901:SF14">
    <property type="entry name" value="MAGNESIUM-DEPENDENT PHOSPHATASE 1"/>
    <property type="match status" value="1"/>
</dbReference>
<dbReference type="PANTHER" id="PTHR17901">
    <property type="entry name" value="MAGNESIUM-DEPENDENT PHOSPHATASE 1 MDP1"/>
    <property type="match status" value="1"/>
</dbReference>
<dbReference type="Pfam" id="PF12689">
    <property type="entry name" value="Acid_PPase"/>
    <property type="match status" value="1"/>
</dbReference>
<dbReference type="SFLD" id="SFLDG01131">
    <property type="entry name" value="C1.5.2:_MDP_Like"/>
    <property type="match status" value="1"/>
</dbReference>
<dbReference type="SFLD" id="SFLDG01129">
    <property type="entry name" value="C1.5:_HAD__Beta-PGM__Phosphata"/>
    <property type="match status" value="1"/>
</dbReference>
<dbReference type="SUPFAM" id="SSF56784">
    <property type="entry name" value="HAD-like"/>
    <property type="match status" value="1"/>
</dbReference>
<evidence type="ECO:0000250" key="1"/>
<evidence type="ECO:0000269" key="2">
    <source>
    </source>
</evidence>
<evidence type="ECO:0000269" key="3">
    <source>
    </source>
</evidence>
<evidence type="ECO:0000305" key="4"/>
<protein>
    <recommendedName>
        <fullName>Putative magnesium-dependent phosphatase YER134C</fullName>
        <ecNumber>3.1.3.48</ecNumber>
    </recommendedName>
</protein>
<sequence>MTGYPDVAAFDLDYTIWPCYCDTHLHGPFKPVKSSNGEVLTIICRDGYELTIYKDIPRILGDLKDNGVKLMTASRTWAPEIAQEILKIFKVKYAGVVTPLANLFDEFQWGERSKIGHLRDGLKDLYNTSDLKSKKICLFDDESRNKEVEKYGVKFVYVRDPENGPSWKLYQDYLSGKV</sequence>
<name>MGDP1_YEAST</name>
<comment type="function">
    <text evidence="1">Magnesium-dependent phosphatase which may act as a tyrosine phosphatase.</text>
</comment>
<comment type="catalytic activity">
    <reaction>
        <text>O-phospho-L-tyrosyl-[protein] + H2O = L-tyrosyl-[protein] + phosphate</text>
        <dbReference type="Rhea" id="RHEA:10684"/>
        <dbReference type="Rhea" id="RHEA-COMP:10136"/>
        <dbReference type="Rhea" id="RHEA-COMP:20101"/>
        <dbReference type="ChEBI" id="CHEBI:15377"/>
        <dbReference type="ChEBI" id="CHEBI:43474"/>
        <dbReference type="ChEBI" id="CHEBI:46858"/>
        <dbReference type="ChEBI" id="CHEBI:61978"/>
        <dbReference type="EC" id="3.1.3.48"/>
    </reaction>
</comment>
<comment type="subcellular location">
    <subcellularLocation>
        <location evidence="2">Cytoplasm</location>
    </subcellularLocation>
    <subcellularLocation>
        <location evidence="2">Nucleus</location>
    </subcellularLocation>
</comment>
<comment type="miscellaneous">
    <text evidence="3">Present with 6190 molecules/cell in log phase SD medium.</text>
</comment>
<comment type="similarity">
    <text evidence="4">Belongs to the HAD-like hydrolase superfamily.</text>
</comment>
<organism>
    <name type="scientific">Saccharomyces cerevisiae (strain ATCC 204508 / S288c)</name>
    <name type="common">Baker's yeast</name>
    <dbReference type="NCBI Taxonomy" id="559292"/>
    <lineage>
        <taxon>Eukaryota</taxon>
        <taxon>Fungi</taxon>
        <taxon>Dikarya</taxon>
        <taxon>Ascomycota</taxon>
        <taxon>Saccharomycotina</taxon>
        <taxon>Saccharomycetes</taxon>
        <taxon>Saccharomycetales</taxon>
        <taxon>Saccharomycetaceae</taxon>
        <taxon>Saccharomyces</taxon>
    </lineage>
</organism>
<accession>P40081</accession>
<accession>D3DM40</accession>
<proteinExistence type="evidence at protein level"/>
<gene>
    <name type="ordered locus">YER134C</name>
</gene>